<comment type="function">
    <text evidence="2">Catalyzes the hydrolysis of melibiose and alpha-galactosides of the raffinose family of oligosaccharides (RFOs) such as raffinose and stachyose. Cannot act on polymeric substrates such as locust bean gum.</text>
</comment>
<comment type="catalytic activity">
    <reaction evidence="2">
        <text>Hydrolysis of terminal, non-reducing alpha-D-galactose residues in alpha-D-galactosides, including galactose oligosaccharides, galactomannans and galactolipids.</text>
        <dbReference type="EC" id="3.2.1.22"/>
    </reaction>
</comment>
<comment type="cofactor">
    <cofactor evidence="2">
        <name>Mn(2+)</name>
        <dbReference type="ChEBI" id="CHEBI:29035"/>
    </cofactor>
    <text evidence="1">Binds 1 Mn(2+) ion per subunit.</text>
</comment>
<comment type="cofactor">
    <cofactor evidence="2">
        <name>NAD(+)</name>
        <dbReference type="ChEBI" id="CHEBI:57540"/>
    </cofactor>
    <text evidence="1">Binds 1 NAD(+) per subunit.</text>
</comment>
<comment type="biophysicochemical properties">
    <kinetics>
        <KM evidence="2">10 mM for melibiose</KM>
        <KM evidence="2">25 mM for raffinose</KM>
    </kinetics>
</comment>
<comment type="subunit">
    <text evidence="1">Homodimer.</text>
</comment>
<comment type="subcellular location">
    <subcellularLocation>
        <location evidence="5">Cytoplasm</location>
    </subcellularLocation>
</comment>
<comment type="induction">
    <text evidence="2">Repressed by the transcriptional regulator MelR. Induced by melibiose and raffinose.</text>
</comment>
<comment type="similarity">
    <text evidence="4">Belongs to the glycosyl hydrolase 4 family.</text>
</comment>
<accession>O34645</accession>
<reference key="1">
    <citation type="journal article" date="1997" name="Microbiology">
        <title>Sequencing and functional annotation of the Bacillus subtilis genes in the 200 kb rrnB-dnaB region.</title>
        <authorList>
            <person name="Lapidus A."/>
            <person name="Galleron N."/>
            <person name="Sorokin A."/>
            <person name="Ehrlich S.D."/>
        </authorList>
    </citation>
    <scope>NUCLEOTIDE SEQUENCE [GENOMIC DNA]</scope>
    <source>
        <strain>168</strain>
    </source>
</reference>
<reference key="2">
    <citation type="journal article" date="1997" name="Nature">
        <title>The complete genome sequence of the Gram-positive bacterium Bacillus subtilis.</title>
        <authorList>
            <person name="Kunst F."/>
            <person name="Ogasawara N."/>
            <person name="Moszer I."/>
            <person name="Albertini A.M."/>
            <person name="Alloni G."/>
            <person name="Azevedo V."/>
            <person name="Bertero M.G."/>
            <person name="Bessieres P."/>
            <person name="Bolotin A."/>
            <person name="Borchert S."/>
            <person name="Borriss R."/>
            <person name="Boursier L."/>
            <person name="Brans A."/>
            <person name="Braun M."/>
            <person name="Brignell S.C."/>
            <person name="Bron S."/>
            <person name="Brouillet S."/>
            <person name="Bruschi C.V."/>
            <person name="Caldwell B."/>
            <person name="Capuano V."/>
            <person name="Carter N.M."/>
            <person name="Choi S.-K."/>
            <person name="Codani J.-J."/>
            <person name="Connerton I.F."/>
            <person name="Cummings N.J."/>
            <person name="Daniel R.A."/>
            <person name="Denizot F."/>
            <person name="Devine K.M."/>
            <person name="Duesterhoeft A."/>
            <person name="Ehrlich S.D."/>
            <person name="Emmerson P.T."/>
            <person name="Entian K.-D."/>
            <person name="Errington J."/>
            <person name="Fabret C."/>
            <person name="Ferrari E."/>
            <person name="Foulger D."/>
            <person name="Fritz C."/>
            <person name="Fujita M."/>
            <person name="Fujita Y."/>
            <person name="Fuma S."/>
            <person name="Galizzi A."/>
            <person name="Galleron N."/>
            <person name="Ghim S.-Y."/>
            <person name="Glaser P."/>
            <person name="Goffeau A."/>
            <person name="Golightly E.J."/>
            <person name="Grandi G."/>
            <person name="Guiseppi G."/>
            <person name="Guy B.J."/>
            <person name="Haga K."/>
            <person name="Haiech J."/>
            <person name="Harwood C.R."/>
            <person name="Henaut A."/>
            <person name="Hilbert H."/>
            <person name="Holsappel S."/>
            <person name="Hosono S."/>
            <person name="Hullo M.-F."/>
            <person name="Itaya M."/>
            <person name="Jones L.-M."/>
            <person name="Joris B."/>
            <person name="Karamata D."/>
            <person name="Kasahara Y."/>
            <person name="Klaerr-Blanchard M."/>
            <person name="Klein C."/>
            <person name="Kobayashi Y."/>
            <person name="Koetter P."/>
            <person name="Koningstein G."/>
            <person name="Krogh S."/>
            <person name="Kumano M."/>
            <person name="Kurita K."/>
            <person name="Lapidus A."/>
            <person name="Lardinois S."/>
            <person name="Lauber J."/>
            <person name="Lazarevic V."/>
            <person name="Lee S.-M."/>
            <person name="Levine A."/>
            <person name="Liu H."/>
            <person name="Masuda S."/>
            <person name="Mauel C."/>
            <person name="Medigue C."/>
            <person name="Medina N."/>
            <person name="Mellado R.P."/>
            <person name="Mizuno M."/>
            <person name="Moestl D."/>
            <person name="Nakai S."/>
            <person name="Noback M."/>
            <person name="Noone D."/>
            <person name="O'Reilly M."/>
            <person name="Ogawa K."/>
            <person name="Ogiwara A."/>
            <person name="Oudega B."/>
            <person name="Park S.-H."/>
            <person name="Parro V."/>
            <person name="Pohl T.M."/>
            <person name="Portetelle D."/>
            <person name="Porwollik S."/>
            <person name="Prescott A.M."/>
            <person name="Presecan E."/>
            <person name="Pujic P."/>
            <person name="Purnelle B."/>
            <person name="Rapoport G."/>
            <person name="Rey M."/>
            <person name="Reynolds S."/>
            <person name="Rieger M."/>
            <person name="Rivolta C."/>
            <person name="Rocha E."/>
            <person name="Roche B."/>
            <person name="Rose M."/>
            <person name="Sadaie Y."/>
            <person name="Sato T."/>
            <person name="Scanlan E."/>
            <person name="Schleich S."/>
            <person name="Schroeter R."/>
            <person name="Scoffone F."/>
            <person name="Sekiguchi J."/>
            <person name="Sekowska A."/>
            <person name="Seror S.J."/>
            <person name="Serror P."/>
            <person name="Shin B.-S."/>
            <person name="Soldo B."/>
            <person name="Sorokin A."/>
            <person name="Tacconi E."/>
            <person name="Takagi T."/>
            <person name="Takahashi H."/>
            <person name="Takemaru K."/>
            <person name="Takeuchi M."/>
            <person name="Tamakoshi A."/>
            <person name="Tanaka T."/>
            <person name="Terpstra P."/>
            <person name="Tognoni A."/>
            <person name="Tosato V."/>
            <person name="Uchiyama S."/>
            <person name="Vandenbol M."/>
            <person name="Vannier F."/>
            <person name="Vassarotti A."/>
            <person name="Viari A."/>
            <person name="Wambutt R."/>
            <person name="Wedler E."/>
            <person name="Wedler H."/>
            <person name="Weitzenegger T."/>
            <person name="Winters P."/>
            <person name="Wipat A."/>
            <person name="Yamamoto H."/>
            <person name="Yamane K."/>
            <person name="Yasumoto K."/>
            <person name="Yata K."/>
            <person name="Yoshida K."/>
            <person name="Yoshikawa H.-F."/>
            <person name="Zumstein E."/>
            <person name="Yoshikawa H."/>
            <person name="Danchin A."/>
        </authorList>
    </citation>
    <scope>NUCLEOTIDE SEQUENCE [LARGE SCALE GENOMIC DNA]</scope>
    <source>
        <strain>168</strain>
    </source>
</reference>
<reference key="3">
    <citation type="journal article" date="2019" name="J. Bacteriol.">
        <title>The melREDCA operon encodes a utilization system for the raffinose family of oligosaccharides in Bacillus subtilis.</title>
        <authorList>
            <person name="Morabbi Heravi K."/>
            <person name="Watzlawick H."/>
            <person name="Altenbuchner J."/>
        </authorList>
    </citation>
    <scope>FUNCTION</scope>
    <scope>CATALYTIC ACTIVITY</scope>
    <scope>COFACTOR</scope>
    <scope>BIOPHYSICOCHEMICAL PROPERTIES</scope>
    <scope>SUBCELLULAR LOCATION</scope>
    <scope>INDUCTION</scope>
    <source>
        <strain>168 / KM0</strain>
    </source>
</reference>
<protein>
    <recommendedName>
        <fullName evidence="4">Alpha-galactosidase</fullName>
        <ecNumber evidence="2">3.2.1.22</ecNumber>
    </recommendedName>
    <alternativeName>
        <fullName>Melibiase</fullName>
    </alternativeName>
</protein>
<proteinExistence type="evidence at protein level"/>
<dbReference type="EC" id="3.2.1.22" evidence="2"/>
<dbReference type="EMBL" id="AF008220">
    <property type="protein sequence ID" value="AAC00383.1"/>
    <property type="molecule type" value="Genomic_DNA"/>
</dbReference>
<dbReference type="EMBL" id="AL009126">
    <property type="protein sequence ID" value="CAB15008.1"/>
    <property type="molecule type" value="Genomic_DNA"/>
</dbReference>
<dbReference type="PIR" id="E69656">
    <property type="entry name" value="E69656"/>
</dbReference>
<dbReference type="RefSeq" id="NP_390908.1">
    <property type="nucleotide sequence ID" value="NC_000964.3"/>
</dbReference>
<dbReference type="RefSeq" id="WP_003246000.1">
    <property type="nucleotide sequence ID" value="NZ_OZ025638.1"/>
</dbReference>
<dbReference type="SMR" id="O34645"/>
<dbReference type="FunCoup" id="O34645">
    <property type="interactions" value="63"/>
</dbReference>
<dbReference type="STRING" id="224308.BSU30300"/>
<dbReference type="CAZy" id="GH4">
    <property type="family name" value="Glycoside Hydrolase Family 4"/>
</dbReference>
<dbReference type="jPOST" id="O34645"/>
<dbReference type="PaxDb" id="224308-BSU30300"/>
<dbReference type="EnsemblBacteria" id="CAB15008">
    <property type="protein sequence ID" value="CAB15008"/>
    <property type="gene ID" value="BSU_30300"/>
</dbReference>
<dbReference type="GeneID" id="937255"/>
<dbReference type="KEGG" id="bsu:BSU30300"/>
<dbReference type="PATRIC" id="fig|224308.179.peg.3286"/>
<dbReference type="eggNOG" id="COG1486">
    <property type="taxonomic scope" value="Bacteria"/>
</dbReference>
<dbReference type="InParanoid" id="O34645"/>
<dbReference type="OrthoDB" id="9808275at2"/>
<dbReference type="PhylomeDB" id="O34645"/>
<dbReference type="BioCyc" id="BSUB:BSU30300-MONOMER"/>
<dbReference type="Proteomes" id="UP000001570">
    <property type="component" value="Chromosome"/>
</dbReference>
<dbReference type="GO" id="GO:0005829">
    <property type="term" value="C:cytosol"/>
    <property type="evidence" value="ECO:0000318"/>
    <property type="project" value="GO_Central"/>
</dbReference>
<dbReference type="GO" id="GO:0004557">
    <property type="term" value="F:alpha-galactosidase activity"/>
    <property type="evidence" value="ECO:0000318"/>
    <property type="project" value="GO_Central"/>
</dbReference>
<dbReference type="GO" id="GO:0046872">
    <property type="term" value="F:metal ion binding"/>
    <property type="evidence" value="ECO:0007669"/>
    <property type="project" value="UniProtKB-KW"/>
</dbReference>
<dbReference type="GO" id="GO:0016616">
    <property type="term" value="F:oxidoreductase activity, acting on the CH-OH group of donors, NAD or NADP as acceptor"/>
    <property type="evidence" value="ECO:0007669"/>
    <property type="project" value="InterPro"/>
</dbReference>
<dbReference type="GO" id="GO:0005975">
    <property type="term" value="P:carbohydrate metabolic process"/>
    <property type="evidence" value="ECO:0007669"/>
    <property type="project" value="InterPro"/>
</dbReference>
<dbReference type="CDD" id="cd05297">
    <property type="entry name" value="GH4_alpha_glucosidase_galactosidase"/>
    <property type="match status" value="1"/>
</dbReference>
<dbReference type="Gene3D" id="3.90.1820.10">
    <property type="entry name" value="AglA-like glucosidase"/>
    <property type="match status" value="1"/>
</dbReference>
<dbReference type="InterPro" id="IPR053715">
    <property type="entry name" value="GH4_Enzyme_sf"/>
</dbReference>
<dbReference type="InterPro" id="IPR019802">
    <property type="entry name" value="GlycHydrolase_4_CS"/>
</dbReference>
<dbReference type="InterPro" id="IPR001088">
    <property type="entry name" value="Glyco_hydro_4"/>
</dbReference>
<dbReference type="InterPro" id="IPR022616">
    <property type="entry name" value="Glyco_hydro_4_C"/>
</dbReference>
<dbReference type="InterPro" id="IPR015955">
    <property type="entry name" value="Lactate_DH/Glyco_Ohase_4_C"/>
</dbReference>
<dbReference type="InterPro" id="IPR036291">
    <property type="entry name" value="NAD(P)-bd_dom_sf"/>
</dbReference>
<dbReference type="NCBIfam" id="NF011657">
    <property type="entry name" value="PRK15076.1"/>
    <property type="match status" value="1"/>
</dbReference>
<dbReference type="PANTHER" id="PTHR32092">
    <property type="entry name" value="6-PHOSPHO-BETA-GLUCOSIDASE-RELATED"/>
    <property type="match status" value="1"/>
</dbReference>
<dbReference type="PANTHER" id="PTHR32092:SF6">
    <property type="entry name" value="ALPHA-GALACTOSIDASE"/>
    <property type="match status" value="1"/>
</dbReference>
<dbReference type="Pfam" id="PF02056">
    <property type="entry name" value="Glyco_hydro_4"/>
    <property type="match status" value="1"/>
</dbReference>
<dbReference type="Pfam" id="PF11975">
    <property type="entry name" value="Glyco_hydro_4C"/>
    <property type="match status" value="1"/>
</dbReference>
<dbReference type="PRINTS" id="PR00732">
    <property type="entry name" value="GLHYDRLASE4"/>
</dbReference>
<dbReference type="SUPFAM" id="SSF56327">
    <property type="entry name" value="LDH C-terminal domain-like"/>
    <property type="match status" value="1"/>
</dbReference>
<dbReference type="SUPFAM" id="SSF51735">
    <property type="entry name" value="NAD(P)-binding Rossmann-fold domains"/>
    <property type="match status" value="1"/>
</dbReference>
<dbReference type="PROSITE" id="PS01324">
    <property type="entry name" value="GLYCOSYL_HYDROL_F4"/>
    <property type="match status" value="1"/>
</dbReference>
<name>AGAL_BACSU</name>
<evidence type="ECO:0000250" key="1"/>
<evidence type="ECO:0000269" key="2">
    <source>
    </source>
</evidence>
<evidence type="ECO:0000303" key="3">
    <source>
    </source>
</evidence>
<evidence type="ECO:0000305" key="4"/>
<evidence type="ECO:0000305" key="5">
    <source>
    </source>
</evidence>
<gene>
    <name evidence="3" type="primary">melA</name>
    <name type="ordered locus">BSU30300</name>
</gene>
<keyword id="KW-0119">Carbohydrate metabolism</keyword>
<keyword id="KW-0963">Cytoplasm</keyword>
<keyword id="KW-0326">Glycosidase</keyword>
<keyword id="KW-0378">Hydrolase</keyword>
<keyword id="KW-0464">Manganese</keyword>
<keyword id="KW-0479">Metal-binding</keyword>
<keyword id="KW-0520">NAD</keyword>
<keyword id="KW-1185">Reference proteome</keyword>
<sequence length="432" mass="49264">MKKITFIGAGSTIFAKNVLGDCLLTEALNGFEFALYDIDPKRLQESQLMLENLRDRYNPSVAINSYDDRKLALQNAGYVINAIQVGGYKPSTVIDFEIPKRYGLRQTIADTVGIGGIFRSLRTIPVLFDIAKDMEEMCPDAWFLNYTNPMATLTGAMLRYTNIKTIGLCHSVQVCTKDLFKALGMEHDGIEERIAGINHMAWLLEVKKDGTDLYPEIKRRAKEKQKTKHHDMVRFELMDKFGYYVTESSEHNAEYHPYFIKRNYPELISELQIPLDEYPRRCVKQIENWEKMRDDIVNNKNLTHERSKEYGSRIIEAMETNEPFTFGGNVLNTGLITNLPSKAVVEVTCVADRKKITPCFAGELPEQLAALNRTNINTQLMTIEAAVTRKKEAVYQAAMLDPHTSAELSMKDIISMCDDLFAAHGDWLPEYK</sequence>
<feature type="chain" id="PRO_0000169851" description="Alpha-galactosidase">
    <location>
        <begin position="1"/>
        <end position="432"/>
    </location>
</feature>
<feature type="active site" description="Proton donor" evidence="1">
    <location>
        <position position="170"/>
    </location>
</feature>
<feature type="binding site" evidence="1">
    <location>
        <begin position="2"/>
        <end position="68"/>
    </location>
    <ligand>
        <name>NAD(+)</name>
        <dbReference type="ChEBI" id="CHEBI:57540"/>
    </ligand>
</feature>
<feature type="binding site" evidence="1">
    <location>
        <position position="148"/>
    </location>
    <ligand>
        <name>substrate</name>
    </ligand>
</feature>
<feature type="binding site" evidence="1">
    <location>
        <position position="169"/>
    </location>
    <ligand>
        <name>Mn(2+)</name>
        <dbReference type="ChEBI" id="CHEBI:29035"/>
    </ligand>
</feature>
<feature type="binding site" evidence="1">
    <location>
        <position position="199"/>
    </location>
    <ligand>
        <name>Mn(2+)</name>
        <dbReference type="ChEBI" id="CHEBI:29035"/>
    </ligand>
</feature>
<organism>
    <name type="scientific">Bacillus subtilis (strain 168)</name>
    <dbReference type="NCBI Taxonomy" id="224308"/>
    <lineage>
        <taxon>Bacteria</taxon>
        <taxon>Bacillati</taxon>
        <taxon>Bacillota</taxon>
        <taxon>Bacilli</taxon>
        <taxon>Bacillales</taxon>
        <taxon>Bacillaceae</taxon>
        <taxon>Bacillus</taxon>
    </lineage>
</organism>